<keyword id="KW-0472">Membrane</keyword>
<keyword id="KW-1185">Reference proteome</keyword>
<keyword id="KW-0812">Transmembrane</keyword>
<keyword id="KW-1133">Transmembrane helix</keyword>
<evidence type="ECO:0000255" key="1"/>
<evidence type="ECO:0000305" key="2"/>
<evidence type="ECO:0000312" key="3">
    <source>
        <dbReference type="FlyBase" id="FBgn0038453"/>
    </source>
</evidence>
<dbReference type="EMBL" id="AE014297">
    <property type="protein sequence ID" value="AAF55348.1"/>
    <property type="molecule type" value="Genomic_DNA"/>
</dbReference>
<dbReference type="EMBL" id="AY094659">
    <property type="protein sequence ID" value="AAM11012.1"/>
    <property type="molecule type" value="mRNA"/>
</dbReference>
<dbReference type="RefSeq" id="NP_001262647.1">
    <property type="nucleotide sequence ID" value="NM_001275718.1"/>
</dbReference>
<dbReference type="RefSeq" id="NP_650570.1">
    <property type="nucleotide sequence ID" value="NM_142313.3"/>
</dbReference>
<dbReference type="SMR" id="Q9VES1"/>
<dbReference type="BioGRID" id="67072">
    <property type="interactions" value="6"/>
</dbReference>
<dbReference type="DIP" id="DIP-17988N"/>
<dbReference type="FunCoup" id="Q9VES1">
    <property type="interactions" value="1071"/>
</dbReference>
<dbReference type="STRING" id="7227.FBpp0082786"/>
<dbReference type="PaxDb" id="7227-FBpp0082786"/>
<dbReference type="DNASU" id="42027"/>
<dbReference type="EnsemblMetazoa" id="FBtr0083336">
    <property type="protein sequence ID" value="FBpp0082786"/>
    <property type="gene ID" value="FBgn0038453"/>
</dbReference>
<dbReference type="EnsemblMetazoa" id="FBtr0333728">
    <property type="protein sequence ID" value="FBpp0305875"/>
    <property type="gene ID" value="FBgn0038453"/>
</dbReference>
<dbReference type="GeneID" id="42027"/>
<dbReference type="KEGG" id="dme:Dmel_CG10326"/>
<dbReference type="UCSC" id="CG10326-RA">
    <property type="organism name" value="d. melanogaster"/>
</dbReference>
<dbReference type="AGR" id="FB:FBgn0038453"/>
<dbReference type="CTD" id="23204"/>
<dbReference type="FlyBase" id="FBgn0038453">
    <property type="gene designation" value="Arl6IP1"/>
</dbReference>
<dbReference type="VEuPathDB" id="VectorBase:FBgn0038453"/>
<dbReference type="eggNOG" id="ENOG502QTTI">
    <property type="taxonomic scope" value="Eukaryota"/>
</dbReference>
<dbReference type="GeneTree" id="ENSGT00940000154937"/>
<dbReference type="HOGENOM" id="CLU_100749_0_0_1"/>
<dbReference type="InParanoid" id="Q9VES1"/>
<dbReference type="OMA" id="LAFFMDF"/>
<dbReference type="OrthoDB" id="6416122at2759"/>
<dbReference type="PhylomeDB" id="Q9VES1"/>
<dbReference type="BioGRID-ORCS" id="42027">
    <property type="hits" value="0 hits in 1 CRISPR screen"/>
</dbReference>
<dbReference type="GenomeRNAi" id="42027"/>
<dbReference type="PRO" id="PR:Q9VES1"/>
<dbReference type="Proteomes" id="UP000000803">
    <property type="component" value="Chromosome 3R"/>
</dbReference>
<dbReference type="Bgee" id="FBgn0038453">
    <property type="expression patterns" value="Expressed in spermatogonium in testis and 241 other cell types or tissues"/>
</dbReference>
<dbReference type="ExpressionAtlas" id="Q9VES1">
    <property type="expression patterns" value="baseline and differential"/>
</dbReference>
<dbReference type="GO" id="GO:0071782">
    <property type="term" value="C:endoplasmic reticulum tubular network"/>
    <property type="evidence" value="ECO:0000314"/>
    <property type="project" value="FlyBase"/>
</dbReference>
<dbReference type="GO" id="GO:0016020">
    <property type="term" value="C:membrane"/>
    <property type="evidence" value="ECO:0000318"/>
    <property type="project" value="GO_Central"/>
</dbReference>
<dbReference type="GO" id="GO:1990809">
    <property type="term" value="P:endoplasmic reticulum tubular network membrane organization"/>
    <property type="evidence" value="ECO:0000315"/>
    <property type="project" value="FlyBase"/>
</dbReference>
<dbReference type="GO" id="GO:0007005">
    <property type="term" value="P:mitochondrion organization"/>
    <property type="evidence" value="ECO:0000315"/>
    <property type="project" value="FlyBase"/>
</dbReference>
<dbReference type="InterPro" id="IPR052114">
    <property type="entry name" value="ER_autophagy_membrane_reg"/>
</dbReference>
<dbReference type="PANTHER" id="PTHR20952:SF0">
    <property type="entry name" value="ADP-RIBOSYLATION FACTOR-LIKE PROTEIN 6-INTERACTING PROTEIN 1"/>
    <property type="match status" value="1"/>
</dbReference>
<dbReference type="PANTHER" id="PTHR20952">
    <property type="entry name" value="ADP-RIBOSYLATION-LIKE FACTOR 6-INTERACTING PROTEIN"/>
    <property type="match status" value="1"/>
</dbReference>
<dbReference type="Pfam" id="PF24456">
    <property type="entry name" value="RHD_RETREG1-3"/>
    <property type="match status" value="1"/>
</dbReference>
<reference key="1">
    <citation type="journal article" date="2000" name="Science">
        <title>The genome sequence of Drosophila melanogaster.</title>
        <authorList>
            <person name="Adams M.D."/>
            <person name="Celniker S.E."/>
            <person name="Holt R.A."/>
            <person name="Evans C.A."/>
            <person name="Gocayne J.D."/>
            <person name="Amanatides P.G."/>
            <person name="Scherer S.E."/>
            <person name="Li P.W."/>
            <person name="Hoskins R.A."/>
            <person name="Galle R.F."/>
            <person name="George R.A."/>
            <person name="Lewis S.E."/>
            <person name="Richards S."/>
            <person name="Ashburner M."/>
            <person name="Henderson S.N."/>
            <person name="Sutton G.G."/>
            <person name="Wortman J.R."/>
            <person name="Yandell M.D."/>
            <person name="Zhang Q."/>
            <person name="Chen L.X."/>
            <person name="Brandon R.C."/>
            <person name="Rogers Y.-H.C."/>
            <person name="Blazej R.G."/>
            <person name="Champe M."/>
            <person name="Pfeiffer B.D."/>
            <person name="Wan K.H."/>
            <person name="Doyle C."/>
            <person name="Baxter E.G."/>
            <person name="Helt G."/>
            <person name="Nelson C.R."/>
            <person name="Miklos G.L.G."/>
            <person name="Abril J.F."/>
            <person name="Agbayani A."/>
            <person name="An H.-J."/>
            <person name="Andrews-Pfannkoch C."/>
            <person name="Baldwin D."/>
            <person name="Ballew R.M."/>
            <person name="Basu A."/>
            <person name="Baxendale J."/>
            <person name="Bayraktaroglu L."/>
            <person name="Beasley E.M."/>
            <person name="Beeson K.Y."/>
            <person name="Benos P.V."/>
            <person name="Berman B.P."/>
            <person name="Bhandari D."/>
            <person name="Bolshakov S."/>
            <person name="Borkova D."/>
            <person name="Botchan M.R."/>
            <person name="Bouck J."/>
            <person name="Brokstein P."/>
            <person name="Brottier P."/>
            <person name="Burtis K.C."/>
            <person name="Busam D.A."/>
            <person name="Butler H."/>
            <person name="Cadieu E."/>
            <person name="Center A."/>
            <person name="Chandra I."/>
            <person name="Cherry J.M."/>
            <person name="Cawley S."/>
            <person name="Dahlke C."/>
            <person name="Davenport L.B."/>
            <person name="Davies P."/>
            <person name="de Pablos B."/>
            <person name="Delcher A."/>
            <person name="Deng Z."/>
            <person name="Mays A.D."/>
            <person name="Dew I."/>
            <person name="Dietz S.M."/>
            <person name="Dodson K."/>
            <person name="Doup L.E."/>
            <person name="Downes M."/>
            <person name="Dugan-Rocha S."/>
            <person name="Dunkov B.C."/>
            <person name="Dunn P."/>
            <person name="Durbin K.J."/>
            <person name="Evangelista C.C."/>
            <person name="Ferraz C."/>
            <person name="Ferriera S."/>
            <person name="Fleischmann W."/>
            <person name="Fosler C."/>
            <person name="Gabrielian A.E."/>
            <person name="Garg N.S."/>
            <person name="Gelbart W.M."/>
            <person name="Glasser K."/>
            <person name="Glodek A."/>
            <person name="Gong F."/>
            <person name="Gorrell J.H."/>
            <person name="Gu Z."/>
            <person name="Guan P."/>
            <person name="Harris M."/>
            <person name="Harris N.L."/>
            <person name="Harvey D.A."/>
            <person name="Heiman T.J."/>
            <person name="Hernandez J.R."/>
            <person name="Houck J."/>
            <person name="Hostin D."/>
            <person name="Houston K.A."/>
            <person name="Howland T.J."/>
            <person name="Wei M.-H."/>
            <person name="Ibegwam C."/>
            <person name="Jalali M."/>
            <person name="Kalush F."/>
            <person name="Karpen G.H."/>
            <person name="Ke Z."/>
            <person name="Kennison J.A."/>
            <person name="Ketchum K.A."/>
            <person name="Kimmel B.E."/>
            <person name="Kodira C.D."/>
            <person name="Kraft C.L."/>
            <person name="Kravitz S."/>
            <person name="Kulp D."/>
            <person name="Lai Z."/>
            <person name="Lasko P."/>
            <person name="Lei Y."/>
            <person name="Levitsky A.A."/>
            <person name="Li J.H."/>
            <person name="Li Z."/>
            <person name="Liang Y."/>
            <person name="Lin X."/>
            <person name="Liu X."/>
            <person name="Mattei B."/>
            <person name="McIntosh T.C."/>
            <person name="McLeod M.P."/>
            <person name="McPherson D."/>
            <person name="Merkulov G."/>
            <person name="Milshina N.V."/>
            <person name="Mobarry C."/>
            <person name="Morris J."/>
            <person name="Moshrefi A."/>
            <person name="Mount S.M."/>
            <person name="Moy M."/>
            <person name="Murphy B."/>
            <person name="Murphy L."/>
            <person name="Muzny D.M."/>
            <person name="Nelson D.L."/>
            <person name="Nelson D.R."/>
            <person name="Nelson K.A."/>
            <person name="Nixon K."/>
            <person name="Nusskern D.R."/>
            <person name="Pacleb J.M."/>
            <person name="Palazzolo M."/>
            <person name="Pittman G.S."/>
            <person name="Pan S."/>
            <person name="Pollard J."/>
            <person name="Puri V."/>
            <person name="Reese M.G."/>
            <person name="Reinert K."/>
            <person name="Remington K."/>
            <person name="Saunders R.D.C."/>
            <person name="Scheeler F."/>
            <person name="Shen H."/>
            <person name="Shue B.C."/>
            <person name="Siden-Kiamos I."/>
            <person name="Simpson M."/>
            <person name="Skupski M.P."/>
            <person name="Smith T.J."/>
            <person name="Spier E."/>
            <person name="Spradling A.C."/>
            <person name="Stapleton M."/>
            <person name="Strong R."/>
            <person name="Sun E."/>
            <person name="Svirskas R."/>
            <person name="Tector C."/>
            <person name="Turner R."/>
            <person name="Venter E."/>
            <person name="Wang A.H."/>
            <person name="Wang X."/>
            <person name="Wang Z.-Y."/>
            <person name="Wassarman D.A."/>
            <person name="Weinstock G.M."/>
            <person name="Weissenbach J."/>
            <person name="Williams S.M."/>
            <person name="Woodage T."/>
            <person name="Worley K.C."/>
            <person name="Wu D."/>
            <person name="Yang S."/>
            <person name="Yao Q.A."/>
            <person name="Ye J."/>
            <person name="Yeh R.-F."/>
            <person name="Zaveri J.S."/>
            <person name="Zhan M."/>
            <person name="Zhang G."/>
            <person name="Zhao Q."/>
            <person name="Zheng L."/>
            <person name="Zheng X.H."/>
            <person name="Zhong F.N."/>
            <person name="Zhong W."/>
            <person name="Zhou X."/>
            <person name="Zhu S.C."/>
            <person name="Zhu X."/>
            <person name="Smith H.O."/>
            <person name="Gibbs R.A."/>
            <person name="Myers E.W."/>
            <person name="Rubin G.M."/>
            <person name="Venter J.C."/>
        </authorList>
    </citation>
    <scope>NUCLEOTIDE SEQUENCE [LARGE SCALE GENOMIC DNA]</scope>
    <source>
        <strain>Berkeley</strain>
    </source>
</reference>
<reference key="2">
    <citation type="journal article" date="2002" name="Genome Biol.">
        <title>Annotation of the Drosophila melanogaster euchromatic genome: a systematic review.</title>
        <authorList>
            <person name="Misra S."/>
            <person name="Crosby M.A."/>
            <person name="Mungall C.J."/>
            <person name="Matthews B.B."/>
            <person name="Campbell K.S."/>
            <person name="Hradecky P."/>
            <person name="Huang Y."/>
            <person name="Kaminker J.S."/>
            <person name="Millburn G.H."/>
            <person name="Prochnik S.E."/>
            <person name="Smith C.D."/>
            <person name="Tupy J.L."/>
            <person name="Whitfield E.J."/>
            <person name="Bayraktaroglu L."/>
            <person name="Berman B.P."/>
            <person name="Bettencourt B.R."/>
            <person name="Celniker S.E."/>
            <person name="de Grey A.D.N.J."/>
            <person name="Drysdale R.A."/>
            <person name="Harris N.L."/>
            <person name="Richter J."/>
            <person name="Russo S."/>
            <person name="Schroeder A.J."/>
            <person name="Shu S.Q."/>
            <person name="Stapleton M."/>
            <person name="Yamada C."/>
            <person name="Ashburner M."/>
            <person name="Gelbart W.M."/>
            <person name="Rubin G.M."/>
            <person name="Lewis S.E."/>
        </authorList>
    </citation>
    <scope>GENOME REANNOTATION</scope>
    <source>
        <strain>Berkeley</strain>
    </source>
</reference>
<reference key="3">
    <citation type="journal article" date="2002" name="Genome Biol.">
        <title>A Drosophila full-length cDNA resource.</title>
        <authorList>
            <person name="Stapleton M."/>
            <person name="Carlson J.W."/>
            <person name="Brokstein P."/>
            <person name="Yu C."/>
            <person name="Champe M."/>
            <person name="George R.A."/>
            <person name="Guarin H."/>
            <person name="Kronmiller B."/>
            <person name="Pacleb J.M."/>
            <person name="Park S."/>
            <person name="Wan K.H."/>
            <person name="Rubin G.M."/>
            <person name="Celniker S.E."/>
        </authorList>
    </citation>
    <scope>NUCLEOTIDE SEQUENCE [LARGE SCALE MRNA]</scope>
    <source>
        <strain>Berkeley</strain>
        <tissue>Testis</tissue>
    </source>
</reference>
<gene>
    <name evidence="3" type="primary">Arl6IP1</name>
    <name evidence="3" type="ORF">CG10326</name>
</gene>
<feature type="chain" id="PRO_0000064654" description="ADP-ribosylation factor-like protein 6-interacting protein 1">
    <location>
        <begin position="1"/>
        <end position="197"/>
    </location>
</feature>
<feature type="transmembrane region" description="Helical" evidence="1">
    <location>
        <begin position="43"/>
        <end position="63"/>
    </location>
</feature>
<feature type="transmembrane region" description="Helical" evidence="1">
    <location>
        <begin position="64"/>
        <end position="84"/>
    </location>
</feature>
<feature type="transmembrane region" description="Helical" evidence="1">
    <location>
        <begin position="129"/>
        <end position="149"/>
    </location>
</feature>
<feature type="transmembrane region" description="Helical" evidence="1">
    <location>
        <begin position="150"/>
        <end position="170"/>
    </location>
</feature>
<organism>
    <name type="scientific">Drosophila melanogaster</name>
    <name type="common">Fruit fly</name>
    <dbReference type="NCBI Taxonomy" id="7227"/>
    <lineage>
        <taxon>Eukaryota</taxon>
        <taxon>Metazoa</taxon>
        <taxon>Ecdysozoa</taxon>
        <taxon>Arthropoda</taxon>
        <taxon>Hexapoda</taxon>
        <taxon>Insecta</taxon>
        <taxon>Pterygota</taxon>
        <taxon>Neoptera</taxon>
        <taxon>Endopterygota</taxon>
        <taxon>Diptera</taxon>
        <taxon>Brachycera</taxon>
        <taxon>Muscomorpha</taxon>
        <taxon>Ephydroidea</taxon>
        <taxon>Drosophilidae</taxon>
        <taxon>Drosophila</taxon>
        <taxon>Sophophora</taxon>
    </lineage>
</organism>
<proteinExistence type="evidence at transcript level"/>
<accession>Q9VES1</accession>
<comment type="subcellular location">
    <subcellularLocation>
        <location evidence="2">Membrane</location>
        <topology evidence="2">Multi-pass membrane protein</topology>
    </subcellularLocation>
</comment>
<comment type="similarity">
    <text evidence="2">Belongs to the ARL6ip family.</text>
</comment>
<protein>
    <recommendedName>
        <fullName evidence="3">ADP-ribosylation factor-like protein 6-interacting protein 1</fullName>
    </recommendedName>
</protein>
<sequence length="197" mass="22234">MAASQVDQKRALNKLKHDLEPFRTAIVGAYGVLTWEKQYYAGVVFGVISCLYLVLWYLDLSLITLLSLLGVISILLNYAFPMVSRLIFGGVNWDGDQEAKFEDVCGQVCAVKGSLVVWYEYLFNERKSTVFVIVMSLGLLAMAWIGAIINNLLLMYLATLLILMWPGLQNKDIFKAITQRASKIINEKIQCGKRKLQ</sequence>
<name>AR6P1_DROME</name>